<gene>
    <name evidence="1" type="primary">rsmH</name>
    <name type="synonym">mraW</name>
    <name type="ordered locus">FTM_1389</name>
</gene>
<organism>
    <name type="scientific">Francisella tularensis subsp. mediasiatica (strain FSC147)</name>
    <dbReference type="NCBI Taxonomy" id="441952"/>
    <lineage>
        <taxon>Bacteria</taxon>
        <taxon>Pseudomonadati</taxon>
        <taxon>Pseudomonadota</taxon>
        <taxon>Gammaproteobacteria</taxon>
        <taxon>Thiotrichales</taxon>
        <taxon>Francisellaceae</taxon>
        <taxon>Francisella</taxon>
    </lineage>
</organism>
<dbReference type="EC" id="2.1.1.199" evidence="1"/>
<dbReference type="EMBL" id="CP000915">
    <property type="protein sequence ID" value="ACD31225.1"/>
    <property type="molecule type" value="Genomic_DNA"/>
</dbReference>
<dbReference type="SMR" id="B2SDL2"/>
<dbReference type="KEGG" id="ftm:FTM_1389"/>
<dbReference type="HOGENOM" id="CLU_038422_2_0_6"/>
<dbReference type="GO" id="GO:0005737">
    <property type="term" value="C:cytoplasm"/>
    <property type="evidence" value="ECO:0007669"/>
    <property type="project" value="UniProtKB-SubCell"/>
</dbReference>
<dbReference type="GO" id="GO:0071424">
    <property type="term" value="F:rRNA (cytosine-N4-)-methyltransferase activity"/>
    <property type="evidence" value="ECO:0007669"/>
    <property type="project" value="UniProtKB-UniRule"/>
</dbReference>
<dbReference type="GO" id="GO:0070475">
    <property type="term" value="P:rRNA base methylation"/>
    <property type="evidence" value="ECO:0007669"/>
    <property type="project" value="UniProtKB-UniRule"/>
</dbReference>
<dbReference type="Gene3D" id="1.10.150.170">
    <property type="entry name" value="Putative methyltransferase TM0872, insert domain"/>
    <property type="match status" value="1"/>
</dbReference>
<dbReference type="Gene3D" id="3.40.50.150">
    <property type="entry name" value="Vaccinia Virus protein VP39"/>
    <property type="match status" value="1"/>
</dbReference>
<dbReference type="HAMAP" id="MF_01007">
    <property type="entry name" value="16SrRNA_methyltr_H"/>
    <property type="match status" value="1"/>
</dbReference>
<dbReference type="InterPro" id="IPR002903">
    <property type="entry name" value="RsmH"/>
</dbReference>
<dbReference type="InterPro" id="IPR023397">
    <property type="entry name" value="SAM-dep_MeTrfase_MraW_recog"/>
</dbReference>
<dbReference type="InterPro" id="IPR029063">
    <property type="entry name" value="SAM-dependent_MTases_sf"/>
</dbReference>
<dbReference type="NCBIfam" id="TIGR00006">
    <property type="entry name" value="16S rRNA (cytosine(1402)-N(4))-methyltransferase RsmH"/>
    <property type="match status" value="1"/>
</dbReference>
<dbReference type="PANTHER" id="PTHR11265:SF0">
    <property type="entry name" value="12S RRNA N4-METHYLCYTIDINE METHYLTRANSFERASE"/>
    <property type="match status" value="1"/>
</dbReference>
<dbReference type="PANTHER" id="PTHR11265">
    <property type="entry name" value="S-ADENOSYL-METHYLTRANSFERASE MRAW"/>
    <property type="match status" value="1"/>
</dbReference>
<dbReference type="Pfam" id="PF01795">
    <property type="entry name" value="Methyltransf_5"/>
    <property type="match status" value="1"/>
</dbReference>
<dbReference type="PIRSF" id="PIRSF004486">
    <property type="entry name" value="MraW"/>
    <property type="match status" value="1"/>
</dbReference>
<dbReference type="SUPFAM" id="SSF81799">
    <property type="entry name" value="Putative methyltransferase TM0872, insert domain"/>
    <property type="match status" value="1"/>
</dbReference>
<dbReference type="SUPFAM" id="SSF53335">
    <property type="entry name" value="S-adenosyl-L-methionine-dependent methyltransferases"/>
    <property type="match status" value="1"/>
</dbReference>
<comment type="function">
    <text evidence="1">Specifically methylates the N4 position of cytidine in position 1402 (C1402) of 16S rRNA.</text>
</comment>
<comment type="catalytic activity">
    <reaction evidence="1">
        <text>cytidine(1402) in 16S rRNA + S-adenosyl-L-methionine = N(4)-methylcytidine(1402) in 16S rRNA + S-adenosyl-L-homocysteine + H(+)</text>
        <dbReference type="Rhea" id="RHEA:42928"/>
        <dbReference type="Rhea" id="RHEA-COMP:10286"/>
        <dbReference type="Rhea" id="RHEA-COMP:10287"/>
        <dbReference type="ChEBI" id="CHEBI:15378"/>
        <dbReference type="ChEBI" id="CHEBI:57856"/>
        <dbReference type="ChEBI" id="CHEBI:59789"/>
        <dbReference type="ChEBI" id="CHEBI:74506"/>
        <dbReference type="ChEBI" id="CHEBI:82748"/>
        <dbReference type="EC" id="2.1.1.199"/>
    </reaction>
</comment>
<comment type="subcellular location">
    <subcellularLocation>
        <location evidence="1">Cytoplasm</location>
    </subcellularLocation>
</comment>
<comment type="similarity">
    <text evidence="1">Belongs to the methyltransferase superfamily. RsmH family.</text>
</comment>
<name>RSMH_FRATM</name>
<reference key="1">
    <citation type="journal article" date="2009" name="PLoS Pathog.">
        <title>Molecular evolutionary consequences of niche restriction in Francisella tularensis, a facultative intracellular pathogen.</title>
        <authorList>
            <person name="Larsson P."/>
            <person name="Elfsmark D."/>
            <person name="Svensson K."/>
            <person name="Wikstroem P."/>
            <person name="Forsman M."/>
            <person name="Brettin T."/>
            <person name="Keim P."/>
            <person name="Johansson A."/>
        </authorList>
    </citation>
    <scope>NUCLEOTIDE SEQUENCE [LARGE SCALE GENOMIC DNA]</scope>
    <source>
        <strain>FSC147</strain>
    </source>
</reference>
<feature type="chain" id="PRO_0000386899" description="Ribosomal RNA small subunit methyltransferase H">
    <location>
        <begin position="1"/>
        <end position="305"/>
    </location>
</feature>
<feature type="binding site" evidence="1">
    <location>
        <begin position="30"/>
        <end position="32"/>
    </location>
    <ligand>
        <name>S-adenosyl-L-methionine</name>
        <dbReference type="ChEBI" id="CHEBI:59789"/>
    </ligand>
</feature>
<feature type="binding site" evidence="1">
    <location>
        <position position="49"/>
    </location>
    <ligand>
        <name>S-adenosyl-L-methionine</name>
        <dbReference type="ChEBI" id="CHEBI:59789"/>
    </ligand>
</feature>
<feature type="binding site" evidence="1">
    <location>
        <position position="74"/>
    </location>
    <ligand>
        <name>S-adenosyl-L-methionine</name>
        <dbReference type="ChEBI" id="CHEBI:59789"/>
    </ligand>
</feature>
<feature type="binding site" evidence="1">
    <location>
        <position position="96"/>
    </location>
    <ligand>
        <name>S-adenosyl-L-methionine</name>
        <dbReference type="ChEBI" id="CHEBI:59789"/>
    </ligand>
</feature>
<feature type="binding site" evidence="1">
    <location>
        <position position="103"/>
    </location>
    <ligand>
        <name>S-adenosyl-L-methionine</name>
        <dbReference type="ChEBI" id="CHEBI:59789"/>
    </ligand>
</feature>
<accession>B2SDL2</accession>
<evidence type="ECO:0000255" key="1">
    <source>
        <dbReference type="HAMAP-Rule" id="MF_01007"/>
    </source>
</evidence>
<keyword id="KW-0963">Cytoplasm</keyword>
<keyword id="KW-0489">Methyltransferase</keyword>
<keyword id="KW-0698">rRNA processing</keyword>
<keyword id="KW-0949">S-adenosyl-L-methionine</keyword>
<keyword id="KW-0808">Transferase</keyword>
<sequence>MHYSVLLQESINDLNINPQGIYIDATFGRGGHSKAILNRLTTGRLIAFDKDLDAISYARENFQFSNFEIVHASFASIYDYCLQHSLLGKIDGIIMDLGVSSPQLDNAARGFSFTHNGPLDMRMDVSKGITASQALEELSVDDLSYIFKVYGEERFAKKIALRIKDYIQQNGSIRTTLELAELIRATIGKKEKKNPATRCFQALRIYVNNELKDLEALLENILAVIKSGGRIAAISFHSLEDRIVKQKFSALINPKQELNRITKMLPQDSSQIKLKWITKKSKANEDELNQNVRSRSAILRVVEKL</sequence>
<protein>
    <recommendedName>
        <fullName evidence="1">Ribosomal RNA small subunit methyltransferase H</fullName>
        <ecNumber evidence="1">2.1.1.199</ecNumber>
    </recommendedName>
    <alternativeName>
        <fullName evidence="1">16S rRNA m(4)C1402 methyltransferase</fullName>
    </alternativeName>
    <alternativeName>
        <fullName evidence="1">rRNA (cytosine-N(4)-)-methyltransferase RsmH</fullName>
    </alternativeName>
</protein>
<proteinExistence type="inferred from homology"/>